<organism>
    <name type="scientific">Francisella tularensis subsp. tularensis (strain SCHU S4 / Schu 4)</name>
    <dbReference type="NCBI Taxonomy" id="177416"/>
    <lineage>
        <taxon>Bacteria</taxon>
        <taxon>Pseudomonadati</taxon>
        <taxon>Pseudomonadota</taxon>
        <taxon>Gammaproteobacteria</taxon>
        <taxon>Thiotrichales</taxon>
        <taxon>Francisellaceae</taxon>
        <taxon>Francisella</taxon>
    </lineage>
</organism>
<feature type="chain" id="PRO_0000265814" description="ATP synthase epsilon chain">
    <location>
        <begin position="1"/>
        <end position="145"/>
    </location>
</feature>
<sequence length="145" mass="15767">MTKKYLKVDVVSPLGSVFKGEADMVSLRGSAGEMGIAYGHTELLSTLPAGVVNVRKDQHTDVLYVSGGIVEVTPTRVTIMVDDMERAENLNQAEAEKARARAKEVLKNPDASKLDIEAANKRLKEADARLKALNSSNGLYYSKDD</sequence>
<comment type="function">
    <text evidence="1">Produces ATP from ADP in the presence of a proton gradient across the membrane.</text>
</comment>
<comment type="subunit">
    <text>F-type ATPases have 2 components, CF(1) - the catalytic core - and CF(0) - the membrane proton channel. CF(1) has five subunits: alpha(3), beta(3), gamma(1), delta(1), epsilon(1). CF(0) has three main subunits: a, b and c.</text>
</comment>
<comment type="subcellular location">
    <subcellularLocation>
        <location evidence="1">Cell inner membrane</location>
        <topology evidence="1">Peripheral membrane protein</topology>
    </subcellularLocation>
</comment>
<comment type="similarity">
    <text evidence="1">Belongs to the ATPase epsilon chain family.</text>
</comment>
<keyword id="KW-0066">ATP synthesis</keyword>
<keyword id="KW-0997">Cell inner membrane</keyword>
<keyword id="KW-1003">Cell membrane</keyword>
<keyword id="KW-0139">CF(1)</keyword>
<keyword id="KW-0375">Hydrogen ion transport</keyword>
<keyword id="KW-0406">Ion transport</keyword>
<keyword id="KW-0472">Membrane</keyword>
<keyword id="KW-1185">Reference proteome</keyword>
<keyword id="KW-0813">Transport</keyword>
<proteinExistence type="inferred from homology"/>
<accession>Q5NIK2</accession>
<evidence type="ECO:0000255" key="1">
    <source>
        <dbReference type="HAMAP-Rule" id="MF_00530"/>
    </source>
</evidence>
<reference key="1">
    <citation type="journal article" date="2005" name="Nat. Genet.">
        <title>The complete genome sequence of Francisella tularensis, the causative agent of tularemia.</title>
        <authorList>
            <person name="Larsson P."/>
            <person name="Oyston P.C.F."/>
            <person name="Chain P."/>
            <person name="Chu M.C."/>
            <person name="Duffield M."/>
            <person name="Fuxelius H.-H."/>
            <person name="Garcia E."/>
            <person name="Haelltorp G."/>
            <person name="Johansson D."/>
            <person name="Isherwood K.E."/>
            <person name="Karp P.D."/>
            <person name="Larsson E."/>
            <person name="Liu Y."/>
            <person name="Michell S."/>
            <person name="Prior J."/>
            <person name="Prior R."/>
            <person name="Malfatti S."/>
            <person name="Sjoestedt A."/>
            <person name="Svensson K."/>
            <person name="Thompson N."/>
            <person name="Vergez L."/>
            <person name="Wagg J.K."/>
            <person name="Wren B.W."/>
            <person name="Lindler L.E."/>
            <person name="Andersson S.G.E."/>
            <person name="Forsman M."/>
            <person name="Titball R.W."/>
        </authorList>
    </citation>
    <scope>NUCLEOTIDE SEQUENCE [LARGE SCALE GENOMIC DNA]</scope>
    <source>
        <strain>SCHU S4 / Schu 4</strain>
    </source>
</reference>
<protein>
    <recommendedName>
        <fullName evidence="1">ATP synthase epsilon chain</fullName>
    </recommendedName>
    <alternativeName>
        <fullName evidence="1">ATP synthase F1 sector epsilon subunit</fullName>
    </alternativeName>
    <alternativeName>
        <fullName evidence="1">F-ATPase epsilon subunit</fullName>
    </alternativeName>
</protein>
<gene>
    <name evidence="1" type="primary">atpC</name>
    <name type="ordered locus">FTT_0065</name>
</gene>
<dbReference type="EMBL" id="AJ749949">
    <property type="protein sequence ID" value="CAG44698.1"/>
    <property type="molecule type" value="Genomic_DNA"/>
</dbReference>
<dbReference type="RefSeq" id="WP_003019771.1">
    <property type="nucleotide sequence ID" value="NZ_CP010290.1"/>
</dbReference>
<dbReference type="RefSeq" id="YP_169140.1">
    <property type="nucleotide sequence ID" value="NC_006570.2"/>
</dbReference>
<dbReference type="SMR" id="Q5NIK2"/>
<dbReference type="STRING" id="177416.FTT_0065"/>
<dbReference type="DNASU" id="3192519"/>
<dbReference type="EnsemblBacteria" id="CAG44698">
    <property type="protein sequence ID" value="CAG44698"/>
    <property type="gene ID" value="FTT_0065"/>
</dbReference>
<dbReference type="KEGG" id="ftu:FTT_0065"/>
<dbReference type="eggNOG" id="COG0355">
    <property type="taxonomic scope" value="Bacteria"/>
</dbReference>
<dbReference type="OrthoDB" id="9791445at2"/>
<dbReference type="Proteomes" id="UP000001174">
    <property type="component" value="Chromosome"/>
</dbReference>
<dbReference type="GO" id="GO:0005886">
    <property type="term" value="C:plasma membrane"/>
    <property type="evidence" value="ECO:0007669"/>
    <property type="project" value="UniProtKB-SubCell"/>
</dbReference>
<dbReference type="GO" id="GO:0045259">
    <property type="term" value="C:proton-transporting ATP synthase complex"/>
    <property type="evidence" value="ECO:0007669"/>
    <property type="project" value="UniProtKB-KW"/>
</dbReference>
<dbReference type="GO" id="GO:0005524">
    <property type="term" value="F:ATP binding"/>
    <property type="evidence" value="ECO:0007669"/>
    <property type="project" value="UniProtKB-UniRule"/>
</dbReference>
<dbReference type="GO" id="GO:0046933">
    <property type="term" value="F:proton-transporting ATP synthase activity, rotational mechanism"/>
    <property type="evidence" value="ECO:0007669"/>
    <property type="project" value="UniProtKB-UniRule"/>
</dbReference>
<dbReference type="CDD" id="cd12152">
    <property type="entry name" value="F1-ATPase_delta"/>
    <property type="match status" value="1"/>
</dbReference>
<dbReference type="Gene3D" id="2.60.15.10">
    <property type="entry name" value="F0F1 ATP synthase delta/epsilon subunit, N-terminal"/>
    <property type="match status" value="1"/>
</dbReference>
<dbReference type="HAMAP" id="MF_00530">
    <property type="entry name" value="ATP_synth_epsil_bac"/>
    <property type="match status" value="1"/>
</dbReference>
<dbReference type="InterPro" id="IPR001469">
    <property type="entry name" value="ATP_synth_F1_dsu/esu"/>
</dbReference>
<dbReference type="InterPro" id="IPR020546">
    <property type="entry name" value="ATP_synth_F1_dsu/esu_N"/>
</dbReference>
<dbReference type="InterPro" id="IPR036771">
    <property type="entry name" value="ATPsynth_dsu/esu_N"/>
</dbReference>
<dbReference type="NCBIfam" id="TIGR01216">
    <property type="entry name" value="ATP_synt_epsi"/>
    <property type="match status" value="1"/>
</dbReference>
<dbReference type="NCBIfam" id="NF009986">
    <property type="entry name" value="PRK13452.1"/>
    <property type="match status" value="1"/>
</dbReference>
<dbReference type="PANTHER" id="PTHR13822">
    <property type="entry name" value="ATP SYNTHASE DELTA/EPSILON CHAIN"/>
    <property type="match status" value="1"/>
</dbReference>
<dbReference type="PANTHER" id="PTHR13822:SF10">
    <property type="entry name" value="ATP SYNTHASE EPSILON CHAIN, CHLOROPLASTIC"/>
    <property type="match status" value="1"/>
</dbReference>
<dbReference type="Pfam" id="PF02823">
    <property type="entry name" value="ATP-synt_DE_N"/>
    <property type="match status" value="1"/>
</dbReference>
<dbReference type="SUPFAM" id="SSF51344">
    <property type="entry name" value="Epsilon subunit of F1F0-ATP synthase N-terminal domain"/>
    <property type="match status" value="1"/>
</dbReference>
<name>ATPE_FRATT</name>